<dbReference type="EMBL" id="U65529">
    <property type="protein sequence ID" value="AAB17960.1"/>
    <property type="molecule type" value="Genomic_DNA"/>
</dbReference>
<dbReference type="SMR" id="Q96701"/>
<dbReference type="KEGG" id="vg:993357"/>
<dbReference type="Proteomes" id="UP000007622">
    <property type="component" value="Genome"/>
</dbReference>
<dbReference type="GO" id="GO:0043657">
    <property type="term" value="C:host cell"/>
    <property type="evidence" value="ECO:0007669"/>
    <property type="project" value="GOC"/>
</dbReference>
<dbReference type="GO" id="GO:0042025">
    <property type="term" value="C:host cell nucleus"/>
    <property type="evidence" value="ECO:0007669"/>
    <property type="project" value="UniProtKB-SubCell"/>
</dbReference>
<dbReference type="GO" id="GO:0039615">
    <property type="term" value="C:T=1 icosahedral viral capsid"/>
    <property type="evidence" value="ECO:0007669"/>
    <property type="project" value="UniProtKB-KW"/>
</dbReference>
<dbReference type="GO" id="GO:0003677">
    <property type="term" value="F:DNA binding"/>
    <property type="evidence" value="ECO:0007669"/>
    <property type="project" value="UniProtKB-KW"/>
</dbReference>
<dbReference type="GO" id="GO:0005198">
    <property type="term" value="F:structural molecule activity"/>
    <property type="evidence" value="ECO:0007669"/>
    <property type="project" value="InterPro"/>
</dbReference>
<dbReference type="GO" id="GO:0008270">
    <property type="term" value="F:zinc ion binding"/>
    <property type="evidence" value="ECO:0007669"/>
    <property type="project" value="UniProtKB-KW"/>
</dbReference>
<dbReference type="GO" id="GO:0046718">
    <property type="term" value="P:symbiont entry into host cell"/>
    <property type="evidence" value="ECO:0007669"/>
    <property type="project" value="UniProtKB-KW"/>
</dbReference>
<dbReference type="GO" id="GO:0075732">
    <property type="term" value="P:viral penetration into host nucleus"/>
    <property type="evidence" value="ECO:0007669"/>
    <property type="project" value="UniProtKB-KW"/>
</dbReference>
<dbReference type="Gene3D" id="2.60.120.20">
    <property type="match status" value="1"/>
</dbReference>
<dbReference type="InterPro" id="IPR000650">
    <property type="entry name" value="Gem_coat_AR1"/>
</dbReference>
<dbReference type="InterPro" id="IPR000263">
    <property type="entry name" value="GV_A/BR1_coat"/>
</dbReference>
<dbReference type="InterPro" id="IPR029053">
    <property type="entry name" value="Viral_coat"/>
</dbReference>
<dbReference type="Pfam" id="PF00844">
    <property type="entry name" value="Gemini_coat"/>
    <property type="match status" value="1"/>
</dbReference>
<dbReference type="PRINTS" id="PR00224">
    <property type="entry name" value="GEMCOATAR1"/>
</dbReference>
<dbReference type="PRINTS" id="PR00223">
    <property type="entry name" value="GEMCOATARBR1"/>
</dbReference>
<organism>
    <name type="scientific">Cabbage leaf curl virus (isolate Jamaica)</name>
    <name type="common">CaLCuV</name>
    <dbReference type="NCBI Taxonomy" id="345184"/>
    <lineage>
        <taxon>Viruses</taxon>
        <taxon>Monodnaviria</taxon>
        <taxon>Shotokuvirae</taxon>
        <taxon>Cressdnaviricota</taxon>
        <taxon>Repensiviricetes</taxon>
        <taxon>Geplafuvirales</taxon>
        <taxon>Geminiviridae</taxon>
        <taxon>Begomovirus</taxon>
    </lineage>
</organism>
<feature type="chain" id="PRO_0000320107" description="Capsid protein">
    <location>
        <begin position="1"/>
        <end position="251"/>
    </location>
</feature>
<feature type="zinc finger region" evidence="2">
    <location>
        <begin position="63"/>
        <end position="80"/>
    </location>
</feature>
<feature type="short sequence motif" description="Bipartite nuclear localization signal" evidence="2">
    <location>
        <begin position="3"/>
        <end position="20"/>
    </location>
</feature>
<feature type="short sequence motif" description="Nuclear localization signal" evidence="2">
    <location>
        <begin position="35"/>
        <end position="49"/>
    </location>
</feature>
<feature type="short sequence motif" description="Nuclear export signal" evidence="2">
    <location>
        <begin position="96"/>
        <end position="117"/>
    </location>
</feature>
<feature type="short sequence motif" description="Bipartite nuclear localization signal" evidence="2">
    <location>
        <begin position="195"/>
        <end position="242"/>
    </location>
</feature>
<evidence type="ECO:0000250" key="1"/>
<evidence type="ECO:0000255" key="2"/>
<evidence type="ECO:0000305" key="3"/>
<organismHost>
    <name type="scientific">Brassica oleracea</name>
    <name type="common">Wild cabbage</name>
    <dbReference type="NCBI Taxonomy" id="3712"/>
</organismHost>
<proteinExistence type="inferred from homology"/>
<keyword id="KW-0167">Capsid protein</keyword>
<keyword id="KW-0238">DNA-binding</keyword>
<keyword id="KW-1048">Host nucleus</keyword>
<keyword id="KW-0945">Host-virus interaction</keyword>
<keyword id="KW-0479">Metal-binding</keyword>
<keyword id="KW-1140">T=1 icosahedral capsid protein</keyword>
<keyword id="KW-1163">Viral penetration into host nucleus</keyword>
<keyword id="KW-0946">Virion</keyword>
<keyword id="KW-1160">Virus entry into host cell</keyword>
<keyword id="KW-0862">Zinc</keyword>
<keyword id="KW-0863">Zinc-finger</keyword>
<reference key="1">
    <citation type="journal article" date="1992" name="Phytopathology">
        <title>Cloning, identification and partial sequencing of a new geminivirus infecting Brassicaceae.</title>
        <authorList>
            <person name="Abouzid A.M."/>
            <person name="Hiebert E."/>
            <person name="Strandberg J.O."/>
        </authorList>
    </citation>
    <scope>NUCLEOTIDE SEQUENCE [GENOMIC DNA]</scope>
</reference>
<accession>Q96701</accession>
<protein>
    <recommendedName>
        <fullName>Capsid protein</fullName>
    </recommendedName>
    <alternativeName>
        <fullName>Coat protein</fullName>
        <shortName>CP</shortName>
    </alternativeName>
</protein>
<comment type="function">
    <text>Encapsidates the viral DNA into characteristic twinned ('geminate') particles. Binds the genomic viral ssDNA and shuttles it into and out of the cell nucleus. The CP of bipartite geminiviruses is not required for cell-to-cell or systemic movement.</text>
</comment>
<comment type="subunit">
    <text evidence="1">Homomultimer. Binds to single-stranded and double-stranded viral DNA. Interacts (via nuclear localization signals) with host importin alpha-1a (By similarity).</text>
</comment>
<comment type="subcellular location">
    <subcellularLocation>
        <location evidence="3">Virion</location>
    </subcellularLocation>
    <subcellularLocation>
        <location evidence="1">Host nucleus</location>
    </subcellularLocation>
    <text evidence="1">It is actively transported into the host cell nucleus. It may be exported out of the nucleus through a nuclear export signal for cell-to-cell movement and spread (By similarity).</text>
</comment>
<comment type="similarity">
    <text evidence="3">Belongs to the geminiviridae capsid protein family.</text>
</comment>
<gene>
    <name type="ORF">AR1</name>
    <name type="ORF">AV1</name>
</gene>
<name>CAPSD_CALCV</name>
<sequence length="251" mass="29313">MPKRDAPWRSMAGTSKVSRNANYSPRAGMIHKFDKAAAWVNRPMYRKPRIYRTFRSPDVPRGCEGPCKVQSYEQRHDISHVGKVMCISDITRGNGITHRVGKRFCVKSVYILGKIWMDENIKLKNHTNSVMFWLVRDRRPYGTPMEFGQVFNMFDNEPSTATVKNDLRDRYQVMHKFYAKVTGGQYASNEQALVKRFWKVNNYVVYNHQEAGKYENHTENALLLYMACTHASNPVYATLKIRIYFYDSITN</sequence>